<feature type="chain" id="PRO_0000354227" description="Small ribosomal subunit protein uS15">
    <location>
        <begin position="1"/>
        <end position="170"/>
    </location>
</feature>
<feature type="region of interest" description="Disordered" evidence="2">
    <location>
        <begin position="1"/>
        <end position="20"/>
    </location>
</feature>
<feature type="compositionally biased region" description="Basic residues" evidence="2">
    <location>
        <begin position="1"/>
        <end position="10"/>
    </location>
</feature>
<reference key="1">
    <citation type="submission" date="2006-10" db="EMBL/GenBank/DDBJ databases">
        <title>Complete sequence of Methanosaeta thermophila PT.</title>
        <authorList>
            <consortium name="US DOE Joint Genome Institute"/>
            <person name="Copeland A."/>
            <person name="Lucas S."/>
            <person name="Lapidus A."/>
            <person name="Barry K."/>
            <person name="Detter J.C."/>
            <person name="Glavina del Rio T."/>
            <person name="Hammon N."/>
            <person name="Israni S."/>
            <person name="Pitluck S."/>
            <person name="Chain P."/>
            <person name="Malfatti S."/>
            <person name="Shin M."/>
            <person name="Vergez L."/>
            <person name="Schmutz J."/>
            <person name="Larimer F."/>
            <person name="Land M."/>
            <person name="Hauser L."/>
            <person name="Kyrpides N."/>
            <person name="Kim E."/>
            <person name="Smith K.S."/>
            <person name="Ingram-Smith C."/>
            <person name="Richardson P."/>
        </authorList>
    </citation>
    <scope>NUCLEOTIDE SEQUENCE [LARGE SCALE GENOMIC DNA]</scope>
    <source>
        <strain>DSM 6194 / JCM 14653 / NBRC 101360 / PT</strain>
    </source>
</reference>
<protein>
    <recommendedName>
        <fullName evidence="1">Small ribosomal subunit protein uS15</fullName>
    </recommendedName>
    <alternativeName>
        <fullName evidence="3">30S ribosomal protein S15</fullName>
    </alternativeName>
</protein>
<sequence length="170" mass="19640">MARMHSRKKGSSGSRPPVVDKLPEWCDVSKEELEKTIMTLHERGMSNAMIGLTLRDQYGVPNLKLILGKSLSSFLRDRNALPEIPEDLSNLMRKALRLRRHLLRAQPRGTVSDTSISRLPRTKDIHNKRALQLVESKIRRLVRYYKQVGRLPATWEYRPETAEIQISSKQ</sequence>
<comment type="subunit">
    <text evidence="1">Part of the 30S ribosomal subunit.</text>
</comment>
<comment type="similarity">
    <text evidence="1">Belongs to the universal ribosomal protein uS15 family.</text>
</comment>
<keyword id="KW-1185">Reference proteome</keyword>
<keyword id="KW-0687">Ribonucleoprotein</keyword>
<keyword id="KW-0689">Ribosomal protein</keyword>
<accession>A0B5E6</accession>
<proteinExistence type="inferred from homology"/>
<organism>
    <name type="scientific">Methanothrix thermoacetophila (strain DSM 6194 / JCM 14653 / NBRC 101360 / PT)</name>
    <name type="common">Methanosaeta thermophila</name>
    <dbReference type="NCBI Taxonomy" id="349307"/>
    <lineage>
        <taxon>Archaea</taxon>
        <taxon>Methanobacteriati</taxon>
        <taxon>Methanobacteriota</taxon>
        <taxon>Stenosarchaea group</taxon>
        <taxon>Methanomicrobia</taxon>
        <taxon>Methanotrichales</taxon>
        <taxon>Methanotrichaceae</taxon>
        <taxon>Methanothrix</taxon>
    </lineage>
</organism>
<dbReference type="EMBL" id="CP000477">
    <property type="protein sequence ID" value="ABK13920.1"/>
    <property type="molecule type" value="Genomic_DNA"/>
</dbReference>
<dbReference type="RefSeq" id="WP_011695319.1">
    <property type="nucleotide sequence ID" value="NC_008553.1"/>
</dbReference>
<dbReference type="SMR" id="A0B5E6"/>
<dbReference type="STRING" id="349307.Mthe_0120"/>
<dbReference type="GeneID" id="4462294"/>
<dbReference type="KEGG" id="mtp:Mthe_0120"/>
<dbReference type="HOGENOM" id="CLU_090139_2_0_2"/>
<dbReference type="OrthoDB" id="6533at2157"/>
<dbReference type="Proteomes" id="UP000000674">
    <property type="component" value="Chromosome"/>
</dbReference>
<dbReference type="GO" id="GO:0022627">
    <property type="term" value="C:cytosolic small ribosomal subunit"/>
    <property type="evidence" value="ECO:0007669"/>
    <property type="project" value="TreeGrafter"/>
</dbReference>
<dbReference type="GO" id="GO:0070181">
    <property type="term" value="F:small ribosomal subunit rRNA binding"/>
    <property type="evidence" value="ECO:0007669"/>
    <property type="project" value="TreeGrafter"/>
</dbReference>
<dbReference type="GO" id="GO:0003735">
    <property type="term" value="F:structural constituent of ribosome"/>
    <property type="evidence" value="ECO:0007669"/>
    <property type="project" value="InterPro"/>
</dbReference>
<dbReference type="GO" id="GO:0006412">
    <property type="term" value="P:translation"/>
    <property type="evidence" value="ECO:0007669"/>
    <property type="project" value="UniProtKB-UniRule"/>
</dbReference>
<dbReference type="CDD" id="cd00677">
    <property type="entry name" value="S15_NS1_EPRS_RNA-bind"/>
    <property type="match status" value="1"/>
</dbReference>
<dbReference type="Gene3D" id="4.10.860.130">
    <property type="match status" value="1"/>
</dbReference>
<dbReference type="Gene3D" id="1.10.287.10">
    <property type="entry name" value="S15/NS1, RNA-binding"/>
    <property type="match status" value="1"/>
</dbReference>
<dbReference type="HAMAP" id="MF_01343_A">
    <property type="entry name" value="Ribosomal_uS15_A"/>
    <property type="match status" value="1"/>
</dbReference>
<dbReference type="InterPro" id="IPR000589">
    <property type="entry name" value="Ribosomal_uS15"/>
</dbReference>
<dbReference type="InterPro" id="IPR023029">
    <property type="entry name" value="Ribosomal_uS15_arc_euk"/>
</dbReference>
<dbReference type="InterPro" id="IPR012606">
    <property type="entry name" value="Ribosomal_uS15_N"/>
</dbReference>
<dbReference type="InterPro" id="IPR009068">
    <property type="entry name" value="uS15_NS1_RNA-bd_sf"/>
</dbReference>
<dbReference type="NCBIfam" id="NF006331">
    <property type="entry name" value="PRK08561.1"/>
    <property type="match status" value="1"/>
</dbReference>
<dbReference type="PANTHER" id="PTHR11885">
    <property type="entry name" value="RIBOSOMAL PROTEIN S15P/S13E"/>
    <property type="match status" value="1"/>
</dbReference>
<dbReference type="PANTHER" id="PTHR11885:SF6">
    <property type="entry name" value="SMALL RIBOSOMAL SUBUNIT PROTEIN US15"/>
    <property type="match status" value="1"/>
</dbReference>
<dbReference type="Pfam" id="PF08069">
    <property type="entry name" value="Ribosomal_S13_N"/>
    <property type="match status" value="1"/>
</dbReference>
<dbReference type="Pfam" id="PF00312">
    <property type="entry name" value="Ribosomal_S15"/>
    <property type="match status" value="1"/>
</dbReference>
<dbReference type="SMART" id="SM01386">
    <property type="entry name" value="Ribosomal_S13_N"/>
    <property type="match status" value="1"/>
</dbReference>
<dbReference type="SMART" id="SM01387">
    <property type="entry name" value="Ribosomal_S15"/>
    <property type="match status" value="1"/>
</dbReference>
<dbReference type="SUPFAM" id="SSF47060">
    <property type="entry name" value="S15/NS1 RNA-binding domain"/>
    <property type="match status" value="1"/>
</dbReference>
<name>RS15_METTP</name>
<gene>
    <name evidence="1" type="primary">rps15</name>
    <name type="ordered locus">Mthe_0120</name>
</gene>
<evidence type="ECO:0000255" key="1">
    <source>
        <dbReference type="HAMAP-Rule" id="MF_01343"/>
    </source>
</evidence>
<evidence type="ECO:0000256" key="2">
    <source>
        <dbReference type="SAM" id="MobiDB-lite"/>
    </source>
</evidence>
<evidence type="ECO:0000305" key="3"/>